<reference key="1">
    <citation type="journal article" date="2009" name="BMC Genomics">
        <title>Metabolic analysis of the soil microbe Dechloromonas aromatica str. RCB: indications of a surprisingly complex life-style and cryptic anaerobic pathways for aromatic degradation.</title>
        <authorList>
            <person name="Salinero K.K."/>
            <person name="Keller K."/>
            <person name="Feil W.S."/>
            <person name="Feil H."/>
            <person name="Trong S."/>
            <person name="Di Bartolo G."/>
            <person name="Lapidus A."/>
        </authorList>
    </citation>
    <scope>NUCLEOTIDE SEQUENCE [LARGE SCALE GENOMIC DNA]</scope>
    <source>
        <strain>RCB</strain>
    </source>
</reference>
<protein>
    <recommendedName>
        <fullName evidence="1">4-hydroxy-3-methylbut-2-en-1-yl diphosphate synthase (flavodoxin)</fullName>
        <ecNumber evidence="1">1.17.7.3</ecNumber>
    </recommendedName>
    <alternativeName>
        <fullName evidence="1">1-hydroxy-2-methyl-2-(E)-butenyl 4-diphosphate synthase</fullName>
    </alternativeName>
</protein>
<gene>
    <name evidence="1" type="primary">ispG</name>
    <name type="ordered locus">Daro_2985</name>
</gene>
<comment type="function">
    <text evidence="1">Converts 2C-methyl-D-erythritol 2,4-cyclodiphosphate (ME-2,4cPP) into 1-hydroxy-2-methyl-2-(E)-butenyl 4-diphosphate.</text>
</comment>
<comment type="catalytic activity">
    <reaction evidence="1">
        <text>(2E)-4-hydroxy-3-methylbut-2-enyl diphosphate + oxidized [flavodoxin] + H2O + 2 H(+) = 2-C-methyl-D-erythritol 2,4-cyclic diphosphate + reduced [flavodoxin]</text>
        <dbReference type="Rhea" id="RHEA:43604"/>
        <dbReference type="Rhea" id="RHEA-COMP:10622"/>
        <dbReference type="Rhea" id="RHEA-COMP:10623"/>
        <dbReference type="ChEBI" id="CHEBI:15377"/>
        <dbReference type="ChEBI" id="CHEBI:15378"/>
        <dbReference type="ChEBI" id="CHEBI:57618"/>
        <dbReference type="ChEBI" id="CHEBI:58210"/>
        <dbReference type="ChEBI" id="CHEBI:58483"/>
        <dbReference type="ChEBI" id="CHEBI:128753"/>
        <dbReference type="EC" id="1.17.7.3"/>
    </reaction>
</comment>
<comment type="cofactor">
    <cofactor evidence="1">
        <name>[4Fe-4S] cluster</name>
        <dbReference type="ChEBI" id="CHEBI:49883"/>
    </cofactor>
    <text evidence="1">Binds 1 [4Fe-4S] cluster.</text>
</comment>
<comment type="pathway">
    <text evidence="1">Isoprenoid biosynthesis; isopentenyl diphosphate biosynthesis via DXP pathway; isopentenyl diphosphate from 1-deoxy-D-xylulose 5-phosphate: step 5/6.</text>
</comment>
<comment type="similarity">
    <text evidence="1">Belongs to the IspG family.</text>
</comment>
<feature type="chain" id="PRO_1000011459" description="4-hydroxy-3-methylbut-2-en-1-yl diphosphate synthase (flavodoxin)">
    <location>
        <begin position="1"/>
        <end position="409"/>
    </location>
</feature>
<feature type="binding site" evidence="1">
    <location>
        <position position="298"/>
    </location>
    <ligand>
        <name>[4Fe-4S] cluster</name>
        <dbReference type="ChEBI" id="CHEBI:49883"/>
    </ligand>
</feature>
<feature type="binding site" evidence="1">
    <location>
        <position position="301"/>
    </location>
    <ligand>
        <name>[4Fe-4S] cluster</name>
        <dbReference type="ChEBI" id="CHEBI:49883"/>
    </ligand>
</feature>
<feature type="binding site" evidence="1">
    <location>
        <position position="344"/>
    </location>
    <ligand>
        <name>[4Fe-4S] cluster</name>
        <dbReference type="ChEBI" id="CHEBI:49883"/>
    </ligand>
</feature>
<feature type="binding site" evidence="1">
    <location>
        <position position="351"/>
    </location>
    <ligand>
        <name>[4Fe-4S] cluster</name>
        <dbReference type="ChEBI" id="CHEBI:49883"/>
    </ligand>
</feature>
<organism>
    <name type="scientific">Dechloromonas aromatica (strain RCB)</name>
    <dbReference type="NCBI Taxonomy" id="159087"/>
    <lineage>
        <taxon>Bacteria</taxon>
        <taxon>Pseudomonadati</taxon>
        <taxon>Pseudomonadota</taxon>
        <taxon>Betaproteobacteria</taxon>
        <taxon>Rhodocyclales</taxon>
        <taxon>Azonexaceae</taxon>
        <taxon>Dechloromonas</taxon>
    </lineage>
</organism>
<accession>Q47BR6</accession>
<name>ISPG_DECAR</name>
<evidence type="ECO:0000255" key="1">
    <source>
        <dbReference type="HAMAP-Rule" id="MF_00159"/>
    </source>
</evidence>
<dbReference type="EC" id="1.17.7.3" evidence="1"/>
<dbReference type="EMBL" id="CP000089">
    <property type="protein sequence ID" value="AAZ47715.1"/>
    <property type="molecule type" value="Genomic_DNA"/>
</dbReference>
<dbReference type="SMR" id="Q47BR6"/>
<dbReference type="STRING" id="159087.Daro_2985"/>
<dbReference type="KEGG" id="dar:Daro_2985"/>
<dbReference type="eggNOG" id="COG0821">
    <property type="taxonomic scope" value="Bacteria"/>
</dbReference>
<dbReference type="HOGENOM" id="CLU_042258_1_0_4"/>
<dbReference type="OrthoDB" id="9803214at2"/>
<dbReference type="UniPathway" id="UPA00056">
    <property type="reaction ID" value="UER00096"/>
</dbReference>
<dbReference type="GO" id="GO:0051539">
    <property type="term" value="F:4 iron, 4 sulfur cluster binding"/>
    <property type="evidence" value="ECO:0007669"/>
    <property type="project" value="UniProtKB-UniRule"/>
</dbReference>
<dbReference type="GO" id="GO:0046429">
    <property type="term" value="F:4-hydroxy-3-methylbut-2-en-1-yl diphosphate synthase activity (ferredoxin)"/>
    <property type="evidence" value="ECO:0007669"/>
    <property type="project" value="UniProtKB-UniRule"/>
</dbReference>
<dbReference type="GO" id="GO:0141197">
    <property type="term" value="F:4-hydroxy-3-methylbut-2-enyl-diphosphate synthase activity (flavodoxin)"/>
    <property type="evidence" value="ECO:0007669"/>
    <property type="project" value="UniProtKB-EC"/>
</dbReference>
<dbReference type="GO" id="GO:0005506">
    <property type="term" value="F:iron ion binding"/>
    <property type="evidence" value="ECO:0007669"/>
    <property type="project" value="InterPro"/>
</dbReference>
<dbReference type="GO" id="GO:0019288">
    <property type="term" value="P:isopentenyl diphosphate biosynthetic process, methylerythritol 4-phosphate pathway"/>
    <property type="evidence" value="ECO:0007669"/>
    <property type="project" value="UniProtKB-UniRule"/>
</dbReference>
<dbReference type="GO" id="GO:0016114">
    <property type="term" value="P:terpenoid biosynthetic process"/>
    <property type="evidence" value="ECO:0007669"/>
    <property type="project" value="InterPro"/>
</dbReference>
<dbReference type="FunFam" id="3.30.413.10:FF:000012">
    <property type="entry name" value="4-hydroxy-3-methylbut-2-en-1-yl diphosphate synthase (flavodoxin)"/>
    <property type="match status" value="1"/>
</dbReference>
<dbReference type="Gene3D" id="3.20.20.20">
    <property type="entry name" value="Dihydropteroate synthase-like"/>
    <property type="match status" value="1"/>
</dbReference>
<dbReference type="Gene3D" id="3.30.413.10">
    <property type="entry name" value="Sulfite Reductase Hemoprotein, domain 1"/>
    <property type="match status" value="1"/>
</dbReference>
<dbReference type="HAMAP" id="MF_00159">
    <property type="entry name" value="IspG"/>
    <property type="match status" value="1"/>
</dbReference>
<dbReference type="InterPro" id="IPR011005">
    <property type="entry name" value="Dihydropteroate_synth-like_sf"/>
</dbReference>
<dbReference type="InterPro" id="IPR016425">
    <property type="entry name" value="IspG_bac"/>
</dbReference>
<dbReference type="InterPro" id="IPR004588">
    <property type="entry name" value="IspG_bac-typ"/>
</dbReference>
<dbReference type="InterPro" id="IPR045854">
    <property type="entry name" value="NO2/SO3_Rdtase_4Fe4S_sf"/>
</dbReference>
<dbReference type="NCBIfam" id="TIGR00612">
    <property type="entry name" value="ispG_gcpE"/>
    <property type="match status" value="1"/>
</dbReference>
<dbReference type="NCBIfam" id="NF001540">
    <property type="entry name" value="PRK00366.1"/>
    <property type="match status" value="1"/>
</dbReference>
<dbReference type="PANTHER" id="PTHR30454">
    <property type="entry name" value="4-HYDROXY-3-METHYLBUT-2-EN-1-YL DIPHOSPHATE SYNTHASE"/>
    <property type="match status" value="1"/>
</dbReference>
<dbReference type="PANTHER" id="PTHR30454:SF0">
    <property type="entry name" value="4-HYDROXY-3-METHYLBUT-2-EN-1-YL DIPHOSPHATE SYNTHASE (FERREDOXIN), CHLOROPLASTIC"/>
    <property type="match status" value="1"/>
</dbReference>
<dbReference type="Pfam" id="PF04551">
    <property type="entry name" value="GcpE"/>
    <property type="match status" value="1"/>
</dbReference>
<dbReference type="PIRSF" id="PIRSF004640">
    <property type="entry name" value="IspG"/>
    <property type="match status" value="1"/>
</dbReference>
<sequence>MSTVIKRPTRACVIGHVKIGGDAPVVVQSMTNTDTADYLATALQTAELARAGSELVRITVNSPEAAAAVPKIREHLDRMNCNVPLIGDFHYNGHRLLTEHPACAEALAKYRINPGNVGFGKKKDEQFAQMVELACKYDKPVRIGVNWGSLDQELLARVMDENSRRAEPLDATEMMRHAMVTSALESAAKAEEVGLASEKIILSCKVSSVQDLIAIYRDLSQRANYALHLGLTEAGMGSKGIVASTAALSVLLQEGIGDTIRVSLTPEPGGSRSQEVIVAQEILQTMGLRAFTPMVAACPGCGRTTSTFFQELAGEVQDFVRAKMPEWKLRYDGAENMTLAVMGCIVNGPGESKHANIGISLPGTGEAPSAPVYEDGEKTVTLKGDNIANEFKQIIERYVERTYTKKLKS</sequence>
<proteinExistence type="inferred from homology"/>
<keyword id="KW-0004">4Fe-4S</keyword>
<keyword id="KW-0408">Iron</keyword>
<keyword id="KW-0411">Iron-sulfur</keyword>
<keyword id="KW-0414">Isoprene biosynthesis</keyword>
<keyword id="KW-0479">Metal-binding</keyword>
<keyword id="KW-0560">Oxidoreductase</keyword>